<comment type="cofactor">
    <cofactor evidence="1">
        <name>Zn(2+)</name>
        <dbReference type="ChEBI" id="CHEBI:29105"/>
    </cofactor>
    <text evidence="1">Binds 1 zinc ion.</text>
</comment>
<comment type="subcellular location">
    <subcellularLocation>
        <location evidence="1">Cytoplasm</location>
    </subcellularLocation>
</comment>
<comment type="similarity">
    <text evidence="1">Belongs to the SprT family.</text>
</comment>
<sequence>MLTNQELTAKVKEISLTYFKQSFDHEAKWNQRLRTTGGRFFPKDLHLDFNPKMAELKDFEGVILHELTHYHLYRSKRGYKHRDADFKRLLSQVGGLRYAPSVIDKKIKYYYSCQNCGQLYPRQRKIDTKKYRCGKCRGKLILKTSGN</sequence>
<evidence type="ECO:0000255" key="1">
    <source>
        <dbReference type="HAMAP-Rule" id="MF_00745"/>
    </source>
</evidence>
<accession>Q9CIS0</accession>
<keyword id="KW-0963">Cytoplasm</keyword>
<keyword id="KW-0479">Metal-binding</keyword>
<keyword id="KW-1185">Reference proteome</keyword>
<keyword id="KW-0862">Zinc</keyword>
<reference key="1">
    <citation type="journal article" date="2001" name="Genome Res.">
        <title>The complete genome sequence of the lactic acid bacterium Lactococcus lactis ssp. lactis IL1403.</title>
        <authorList>
            <person name="Bolotin A."/>
            <person name="Wincker P."/>
            <person name="Mauger S."/>
            <person name="Jaillon O."/>
            <person name="Malarme K."/>
            <person name="Weissenbach J."/>
            <person name="Ehrlich S.D."/>
            <person name="Sorokin A."/>
        </authorList>
    </citation>
    <scope>NUCLEOTIDE SEQUENCE [LARGE SCALE GENOMIC DNA]</scope>
    <source>
        <strain>IL1403</strain>
    </source>
</reference>
<organism>
    <name type="scientific">Lactococcus lactis subsp. lactis (strain IL1403)</name>
    <name type="common">Streptococcus lactis</name>
    <dbReference type="NCBI Taxonomy" id="272623"/>
    <lineage>
        <taxon>Bacteria</taxon>
        <taxon>Bacillati</taxon>
        <taxon>Bacillota</taxon>
        <taxon>Bacilli</taxon>
        <taxon>Lactobacillales</taxon>
        <taxon>Streptococcaceae</taxon>
        <taxon>Lactococcus</taxon>
    </lineage>
</organism>
<name>SPRTL_LACLA</name>
<proteinExistence type="inferred from homology"/>
<feature type="chain" id="PRO_0000213290" description="Protein SprT-like">
    <location>
        <begin position="1"/>
        <end position="147"/>
    </location>
</feature>
<feature type="domain" description="SprT-like" evidence="1">
    <location>
        <begin position="9"/>
        <end position="142"/>
    </location>
</feature>
<feature type="active site" evidence="1">
    <location>
        <position position="66"/>
    </location>
</feature>
<feature type="binding site" evidence="1">
    <location>
        <position position="65"/>
    </location>
    <ligand>
        <name>Zn(2+)</name>
        <dbReference type="ChEBI" id="CHEBI:29105"/>
    </ligand>
</feature>
<feature type="binding site" evidence="1">
    <location>
        <position position="69"/>
    </location>
    <ligand>
        <name>Zn(2+)</name>
        <dbReference type="ChEBI" id="CHEBI:29105"/>
    </ligand>
</feature>
<gene>
    <name type="primary">yciD</name>
    <name type="ordered locus">LL0286</name>
    <name type="ORF">L86677</name>
</gene>
<dbReference type="EMBL" id="AE005176">
    <property type="protein sequence ID" value="AAK04384.1"/>
    <property type="molecule type" value="Genomic_DNA"/>
</dbReference>
<dbReference type="PIR" id="F86660">
    <property type="entry name" value="F86660"/>
</dbReference>
<dbReference type="RefSeq" id="NP_266442.1">
    <property type="nucleotide sequence ID" value="NC_002662.1"/>
</dbReference>
<dbReference type="RefSeq" id="WP_010905264.1">
    <property type="nucleotide sequence ID" value="NC_002662.1"/>
</dbReference>
<dbReference type="PaxDb" id="272623-L86677"/>
<dbReference type="EnsemblBacteria" id="AAK04384">
    <property type="protein sequence ID" value="AAK04384"/>
    <property type="gene ID" value="L86677"/>
</dbReference>
<dbReference type="KEGG" id="lla:L86677"/>
<dbReference type="PATRIC" id="fig|272623.7.peg.315"/>
<dbReference type="eggNOG" id="COG3091">
    <property type="taxonomic scope" value="Bacteria"/>
</dbReference>
<dbReference type="HOGENOM" id="CLU_123820_0_0_9"/>
<dbReference type="OrthoDB" id="9799909at2"/>
<dbReference type="Proteomes" id="UP000002196">
    <property type="component" value="Chromosome"/>
</dbReference>
<dbReference type="GO" id="GO:0005737">
    <property type="term" value="C:cytoplasm"/>
    <property type="evidence" value="ECO:0007669"/>
    <property type="project" value="UniProtKB-SubCell"/>
</dbReference>
<dbReference type="GO" id="GO:0008270">
    <property type="term" value="F:zinc ion binding"/>
    <property type="evidence" value="ECO:0007669"/>
    <property type="project" value="UniProtKB-UniRule"/>
</dbReference>
<dbReference type="GO" id="GO:0006950">
    <property type="term" value="P:response to stress"/>
    <property type="evidence" value="ECO:0007669"/>
    <property type="project" value="UniProtKB-ARBA"/>
</dbReference>
<dbReference type="HAMAP" id="MF_00745">
    <property type="entry name" value="SprT_like"/>
    <property type="match status" value="1"/>
</dbReference>
<dbReference type="InterPro" id="IPR006640">
    <property type="entry name" value="SprT-like_domain"/>
</dbReference>
<dbReference type="InterPro" id="IPR035240">
    <property type="entry name" value="SprT_Zn_ribbon"/>
</dbReference>
<dbReference type="InterPro" id="IPR023524">
    <property type="entry name" value="Uncharacterised_SprT-like"/>
</dbReference>
<dbReference type="NCBIfam" id="NF003339">
    <property type="entry name" value="PRK04351.1"/>
    <property type="match status" value="1"/>
</dbReference>
<dbReference type="Pfam" id="PF10263">
    <property type="entry name" value="SprT-like"/>
    <property type="match status" value="1"/>
</dbReference>
<dbReference type="Pfam" id="PF17283">
    <property type="entry name" value="Zn_ribbon_SprT"/>
    <property type="match status" value="1"/>
</dbReference>
<dbReference type="SMART" id="SM00731">
    <property type="entry name" value="SprT"/>
    <property type="match status" value="1"/>
</dbReference>
<protein>
    <recommendedName>
        <fullName evidence="1">Protein SprT-like</fullName>
    </recommendedName>
</protein>